<evidence type="ECO:0000250" key="1"/>
<evidence type="ECO:0000250" key="2">
    <source>
        <dbReference type="UniProtKB" id="Q80TE7"/>
    </source>
</evidence>
<evidence type="ECO:0000250" key="3">
    <source>
        <dbReference type="UniProtKB" id="Q96NW7"/>
    </source>
</evidence>
<evidence type="ECO:0000255" key="4">
    <source>
        <dbReference type="PROSITE-ProRule" id="PRU00143"/>
    </source>
</evidence>
<evidence type="ECO:0000256" key="5">
    <source>
        <dbReference type="SAM" id="MobiDB-lite"/>
    </source>
</evidence>
<evidence type="ECO:0000269" key="6">
    <source>
    </source>
</evidence>
<evidence type="ECO:0000269" key="7">
    <source>
    </source>
</evidence>
<evidence type="ECO:0000269" key="8">
    <source>
    </source>
</evidence>
<evidence type="ECO:0000303" key="9">
    <source>
    </source>
</evidence>
<evidence type="ECO:0000303" key="10">
    <source>
    </source>
</evidence>
<evidence type="ECO:0000305" key="11"/>
<evidence type="ECO:0007744" key="12">
    <source>
    </source>
</evidence>
<gene>
    <name type="primary">Lrrc7</name>
    <name type="synonym">Lap1</name>
</gene>
<accession>P70587</accession>
<accession>Q9JI42</accession>
<protein>
    <recommendedName>
        <fullName>Leucine-rich repeat-containing protein 7</fullName>
    </recommendedName>
    <alternativeName>
        <fullName>Densin-180</fullName>
        <shortName>Densin</shortName>
    </alternativeName>
    <alternativeName>
        <fullName>Protein LAP1</fullName>
    </alternativeName>
</protein>
<name>LRRC7_RAT</name>
<feature type="chain" id="PRO_0000188300" description="Leucine-rich repeat-containing protein 7">
    <location>
        <begin position="1"/>
        <end position="1490"/>
    </location>
</feature>
<feature type="repeat" description="LRR 1">
    <location>
        <begin position="23"/>
        <end position="44"/>
    </location>
</feature>
<feature type="repeat" description="LRR 2">
    <location>
        <begin position="47"/>
        <end position="68"/>
    </location>
</feature>
<feature type="repeat" description="LRR 3">
    <location>
        <begin position="70"/>
        <end position="91"/>
    </location>
</feature>
<feature type="repeat" description="LRR 4">
    <location>
        <begin position="93"/>
        <end position="114"/>
    </location>
</feature>
<feature type="repeat" description="LRR 5">
    <location>
        <begin position="116"/>
        <end position="137"/>
    </location>
</feature>
<feature type="repeat" description="LRR 6">
    <location>
        <begin position="139"/>
        <end position="161"/>
    </location>
</feature>
<feature type="repeat" description="LRR 7">
    <location>
        <begin position="162"/>
        <end position="183"/>
    </location>
</feature>
<feature type="repeat" description="LRR 8">
    <location>
        <begin position="185"/>
        <end position="206"/>
    </location>
</feature>
<feature type="repeat" description="LRR 9">
    <location>
        <begin position="208"/>
        <end position="229"/>
    </location>
</feature>
<feature type="repeat" description="LRR 10">
    <location>
        <begin position="231"/>
        <end position="253"/>
    </location>
</feature>
<feature type="repeat" description="LRR 11">
    <location>
        <begin position="254"/>
        <end position="275"/>
    </location>
</feature>
<feature type="repeat" description="LRR 12">
    <location>
        <begin position="277"/>
        <end position="298"/>
    </location>
</feature>
<feature type="repeat" description="LRR 13">
    <location>
        <begin position="300"/>
        <end position="321"/>
    </location>
</feature>
<feature type="repeat" description="LRR 14">
    <location>
        <begin position="323"/>
        <end position="344"/>
    </location>
</feature>
<feature type="repeat" description="LRR 15">
    <location>
        <begin position="346"/>
        <end position="367"/>
    </location>
</feature>
<feature type="repeat" description="LRR 16">
    <location>
        <begin position="369"/>
        <end position="391"/>
    </location>
</feature>
<feature type="repeat" description="LRR 17">
    <location>
        <begin position="392"/>
        <end position="413"/>
    </location>
</feature>
<feature type="domain" description="PDZ" evidence="4">
    <location>
        <begin position="1398"/>
        <end position="1488"/>
    </location>
</feature>
<feature type="region of interest" description="Disordered" evidence="5">
    <location>
        <begin position="663"/>
        <end position="709"/>
    </location>
</feature>
<feature type="region of interest" description="Disordered" evidence="5">
    <location>
        <begin position="775"/>
        <end position="808"/>
    </location>
</feature>
<feature type="region of interest" description="Disordered" evidence="5">
    <location>
        <begin position="822"/>
        <end position="899"/>
    </location>
</feature>
<feature type="region of interest" description="Disordered" evidence="5">
    <location>
        <begin position="1194"/>
        <end position="1218"/>
    </location>
</feature>
<feature type="region of interest" description="Disordered" evidence="5">
    <location>
        <begin position="1238"/>
        <end position="1265"/>
    </location>
</feature>
<feature type="region of interest" description="Disordered" evidence="5">
    <location>
        <begin position="1282"/>
        <end position="1312"/>
    </location>
</feature>
<feature type="compositionally biased region" description="Basic and acidic residues" evidence="5">
    <location>
        <begin position="663"/>
        <end position="676"/>
    </location>
</feature>
<feature type="compositionally biased region" description="Polar residues" evidence="5">
    <location>
        <begin position="677"/>
        <end position="686"/>
    </location>
</feature>
<feature type="compositionally biased region" description="Low complexity" evidence="5">
    <location>
        <begin position="687"/>
        <end position="700"/>
    </location>
</feature>
<feature type="compositionally biased region" description="Polar residues" evidence="5">
    <location>
        <begin position="787"/>
        <end position="799"/>
    </location>
</feature>
<feature type="compositionally biased region" description="Low complexity" evidence="5">
    <location>
        <begin position="859"/>
        <end position="871"/>
    </location>
</feature>
<feature type="compositionally biased region" description="Basic and acidic residues" evidence="5">
    <location>
        <begin position="872"/>
        <end position="882"/>
    </location>
</feature>
<feature type="compositionally biased region" description="Polar residues" evidence="5">
    <location>
        <begin position="1194"/>
        <end position="1217"/>
    </location>
</feature>
<feature type="compositionally biased region" description="Basic and acidic residues" evidence="5">
    <location>
        <begin position="1243"/>
        <end position="1263"/>
    </location>
</feature>
<feature type="compositionally biased region" description="Polar residues" evidence="5">
    <location>
        <begin position="1286"/>
        <end position="1307"/>
    </location>
</feature>
<feature type="modified residue" description="Phosphoserine" evidence="12">
    <location>
        <position position="439"/>
    </location>
</feature>
<feature type="modified residue" description="Phosphoserine" evidence="12">
    <location>
        <position position="441"/>
    </location>
</feature>
<feature type="modified residue" description="Phosphoserine" evidence="12">
    <location>
        <position position="443"/>
    </location>
</feature>
<feature type="modified residue" description="Phosphothreonine" evidence="2">
    <location>
        <position position="831"/>
    </location>
</feature>
<feature type="modified residue" description="Phosphoserine" evidence="12">
    <location>
        <position position="850"/>
    </location>
</feature>
<feature type="modified residue" description="Phosphothreonine" evidence="12">
    <location>
        <position position="865"/>
    </location>
</feature>
<feature type="modified residue" description="Phosphoserine" evidence="2">
    <location>
        <position position="869"/>
    </location>
</feature>
<feature type="modified residue" description="Phosphoserine" evidence="12">
    <location>
        <position position="947"/>
    </location>
</feature>
<feature type="modified residue" description="Phosphoserine" evidence="12">
    <location>
        <position position="949"/>
    </location>
</feature>
<feature type="modified residue" description="Phosphoserine" evidence="2">
    <location>
        <position position="1118"/>
    </location>
</feature>
<feature type="modified residue" description="Omega-N-methylarginine" evidence="2">
    <location>
        <position position="1149"/>
    </location>
</feature>
<feature type="modified residue" description="Phosphoserine" evidence="2">
    <location>
        <position position="1233"/>
    </location>
</feature>
<feature type="modified residue" description="Phosphoserine" evidence="6">
    <location>
        <position position="1288"/>
    </location>
</feature>
<feature type="modified residue" description="Phosphoserine" evidence="6 12">
    <location>
        <position position="1392"/>
    </location>
</feature>
<feature type="splice variant" id="VSP_010798" description="In isoform 3." evidence="10">
    <location>
        <begin position="1218"/>
        <end position="1241"/>
    </location>
</feature>
<feature type="splice variant" id="VSP_010799" description="In isoform 2." evidence="9">
    <original>R</original>
    <variation>RNAAYKHNTVNLGMLPYGGISAMHAGRSMTLNLQTKSKFDLQDLPLQK</variation>
    <location>
        <position position="1285"/>
    </location>
</feature>
<feature type="splice variant" id="VSP_010800" description="In isoform 4." evidence="9">
    <location>
        <begin position="1286"/>
        <end position="1325"/>
    </location>
</feature>
<feature type="splice variant" id="VSP_010801" description="In isoform 5." evidence="9">
    <location>
        <begin position="1326"/>
        <end position="1399"/>
    </location>
</feature>
<feature type="mutagenesis site" description="Decrease in the level of phosphorylation. Strong decrease in the level of phosphorylation; when associated with D-1392." evidence="6">
    <original>S</original>
    <variation>D</variation>
    <location>
        <position position="1288"/>
    </location>
</feature>
<feature type="mutagenesis site" description="Strong decrease in the level of phosphorylation; when associated with D-1288." evidence="6">
    <original>S</original>
    <variation>D</variation>
    <location>
        <position position="1392"/>
    </location>
</feature>
<feature type="sequence conflict" description="In Ref. 1; AA sequence." evidence="11" ref="1">
    <original>W</original>
    <variation>R</variation>
    <location>
        <position position="722"/>
    </location>
</feature>
<feature type="modified residue" description="Phosphoserine" evidence="11">
    <location sequence="P70587-4">
        <position position="1288"/>
    </location>
</feature>
<dbReference type="EMBL" id="U66707">
    <property type="protein sequence ID" value="AAC52881.1"/>
    <property type="molecule type" value="mRNA"/>
</dbReference>
<dbReference type="EMBL" id="AF266164">
    <property type="protein sequence ID" value="AAF76466.1"/>
    <property type="molecule type" value="mRNA"/>
</dbReference>
<dbReference type="PIR" id="T31434">
    <property type="entry name" value="T31434"/>
</dbReference>
<dbReference type="RefSeq" id="NP_476483.1">
    <property type="nucleotide sequence ID" value="NM_057142.1"/>
</dbReference>
<dbReference type="SMR" id="P70587"/>
<dbReference type="BioGRID" id="250730">
    <property type="interactions" value="8"/>
</dbReference>
<dbReference type="CORUM" id="P70587"/>
<dbReference type="FunCoup" id="P70587">
    <property type="interactions" value="7"/>
</dbReference>
<dbReference type="IntAct" id="P70587">
    <property type="interactions" value="9"/>
</dbReference>
<dbReference type="MINT" id="P70587"/>
<dbReference type="STRING" id="10116.ENSRNOP00000059517"/>
<dbReference type="iPTMnet" id="P70587"/>
<dbReference type="PhosphoSitePlus" id="P70587"/>
<dbReference type="SwissPalm" id="P70587"/>
<dbReference type="PaxDb" id="10116-ENSRNOP00000016453"/>
<dbReference type="Ensembl" id="ENSRNOT00000116114.1">
    <molecule id="P70587-5"/>
    <property type="protein sequence ID" value="ENSRNOP00000093706.1"/>
    <property type="gene ID" value="ENSRNOG00000011980.9"/>
</dbReference>
<dbReference type="GeneID" id="117284"/>
<dbReference type="KEGG" id="rno:117284"/>
<dbReference type="AGR" id="RGD:708527"/>
<dbReference type="CTD" id="57554"/>
<dbReference type="RGD" id="708527">
    <property type="gene designation" value="Lrrc7"/>
</dbReference>
<dbReference type="eggNOG" id="KOG0619">
    <property type="taxonomic scope" value="Eukaryota"/>
</dbReference>
<dbReference type="GeneTree" id="ENSGT00940000156262"/>
<dbReference type="InParanoid" id="P70587"/>
<dbReference type="Reactome" id="R-RNO-438066">
    <property type="pathway name" value="Unblocking of NMDA receptors, glutamate binding and activation"/>
</dbReference>
<dbReference type="Reactome" id="R-RNO-5673001">
    <property type="pathway name" value="RAF/MAP kinase cascade"/>
</dbReference>
<dbReference type="Reactome" id="R-RNO-6798695">
    <property type="pathway name" value="Neutrophil degranulation"/>
</dbReference>
<dbReference type="PRO" id="PR:P70587"/>
<dbReference type="Proteomes" id="UP000002494">
    <property type="component" value="Chromosome 2"/>
</dbReference>
<dbReference type="GO" id="GO:0015629">
    <property type="term" value="C:actin cytoskeleton"/>
    <property type="evidence" value="ECO:0000314"/>
    <property type="project" value="RGD"/>
</dbReference>
<dbReference type="GO" id="GO:0005912">
    <property type="term" value="C:adherens junction"/>
    <property type="evidence" value="ECO:0000318"/>
    <property type="project" value="GO_Central"/>
</dbReference>
<dbReference type="GO" id="GO:0043194">
    <property type="term" value="C:axon initial segment"/>
    <property type="evidence" value="ECO:0000314"/>
    <property type="project" value="RGD"/>
</dbReference>
<dbReference type="GO" id="GO:0016323">
    <property type="term" value="C:basolateral plasma membrane"/>
    <property type="evidence" value="ECO:0000318"/>
    <property type="project" value="GO_Central"/>
</dbReference>
<dbReference type="GO" id="GO:0005829">
    <property type="term" value="C:cytosol"/>
    <property type="evidence" value="ECO:0000304"/>
    <property type="project" value="Reactome"/>
</dbReference>
<dbReference type="GO" id="GO:0043197">
    <property type="term" value="C:dendritic spine"/>
    <property type="evidence" value="ECO:0000314"/>
    <property type="project" value="RGD"/>
</dbReference>
<dbReference type="GO" id="GO:0030175">
    <property type="term" value="C:filopodium"/>
    <property type="evidence" value="ECO:0000314"/>
    <property type="project" value="RGD"/>
</dbReference>
<dbReference type="GO" id="GO:0098978">
    <property type="term" value="C:glutamatergic synapse"/>
    <property type="evidence" value="ECO:0000314"/>
    <property type="project" value="SynGO"/>
</dbReference>
<dbReference type="GO" id="GO:0014069">
    <property type="term" value="C:postsynaptic density"/>
    <property type="evidence" value="ECO:0000318"/>
    <property type="project" value="GO_Central"/>
</dbReference>
<dbReference type="GO" id="GO:0098839">
    <property type="term" value="C:postsynaptic density membrane"/>
    <property type="evidence" value="ECO:0000314"/>
    <property type="project" value="SynGO"/>
</dbReference>
<dbReference type="GO" id="GO:0019901">
    <property type="term" value="F:protein kinase binding"/>
    <property type="evidence" value="ECO:0000353"/>
    <property type="project" value="RGD"/>
</dbReference>
<dbReference type="GO" id="GO:0098609">
    <property type="term" value="P:cell-cell adhesion"/>
    <property type="evidence" value="ECO:0000318"/>
    <property type="project" value="GO_Central"/>
</dbReference>
<dbReference type="GO" id="GO:0045197">
    <property type="term" value="P:establishment or maintenance of epithelial cell apical/basal polarity"/>
    <property type="evidence" value="ECO:0000318"/>
    <property type="project" value="GO_Central"/>
</dbReference>
<dbReference type="GO" id="GO:0098887">
    <property type="term" value="P:neurotransmitter receptor transport, endosome to postsynaptic membrane"/>
    <property type="evidence" value="ECO:0000318"/>
    <property type="project" value="GO_Central"/>
</dbReference>
<dbReference type="GO" id="GO:0010976">
    <property type="term" value="P:positive regulation of neuron projection development"/>
    <property type="evidence" value="ECO:0000314"/>
    <property type="project" value="RGD"/>
</dbReference>
<dbReference type="GO" id="GO:0043113">
    <property type="term" value="P:receptor clustering"/>
    <property type="evidence" value="ECO:0000318"/>
    <property type="project" value="GO_Central"/>
</dbReference>
<dbReference type="GO" id="GO:1901424">
    <property type="term" value="P:response to toluene"/>
    <property type="evidence" value="ECO:0000270"/>
    <property type="project" value="RGD"/>
</dbReference>
<dbReference type="CDD" id="cd06749">
    <property type="entry name" value="PDZ_densin_erbin-like"/>
    <property type="match status" value="1"/>
</dbReference>
<dbReference type="FunFam" id="2.30.42.10:FF:000036">
    <property type="entry name" value="Erbin isoform 7"/>
    <property type="match status" value="1"/>
</dbReference>
<dbReference type="FunFam" id="3.80.10.10:FF:000118">
    <property type="entry name" value="Leucine rich repeat containing 7"/>
    <property type="match status" value="1"/>
</dbReference>
<dbReference type="FunFam" id="3.80.10.10:FF:000061">
    <property type="entry name" value="leucine-rich repeat-containing protein 7 isoform X1"/>
    <property type="match status" value="1"/>
</dbReference>
<dbReference type="Gene3D" id="2.30.42.10">
    <property type="match status" value="1"/>
</dbReference>
<dbReference type="Gene3D" id="3.80.10.10">
    <property type="entry name" value="Ribonuclease Inhibitor"/>
    <property type="match status" value="3"/>
</dbReference>
<dbReference type="InterPro" id="IPR001611">
    <property type="entry name" value="Leu-rich_rpt"/>
</dbReference>
<dbReference type="InterPro" id="IPR003591">
    <property type="entry name" value="Leu-rich_rpt_typical-subtyp"/>
</dbReference>
<dbReference type="InterPro" id="IPR032675">
    <property type="entry name" value="LRR_dom_sf"/>
</dbReference>
<dbReference type="InterPro" id="IPR055414">
    <property type="entry name" value="LRR_R13L4/SHOC2-like"/>
</dbReference>
<dbReference type="InterPro" id="IPR001478">
    <property type="entry name" value="PDZ"/>
</dbReference>
<dbReference type="InterPro" id="IPR036034">
    <property type="entry name" value="PDZ_sf"/>
</dbReference>
<dbReference type="InterPro" id="IPR050614">
    <property type="entry name" value="Synaptic_Scaffolding_LAP-MAGUK"/>
</dbReference>
<dbReference type="PANTHER" id="PTHR23119">
    <property type="entry name" value="DISCS LARGE"/>
    <property type="match status" value="1"/>
</dbReference>
<dbReference type="PANTHER" id="PTHR23119:SF48">
    <property type="entry name" value="LEUCINE-RICH REPEAT-CONTAINING PROTEIN 7"/>
    <property type="match status" value="1"/>
</dbReference>
<dbReference type="Pfam" id="PF23598">
    <property type="entry name" value="LRR_14"/>
    <property type="match status" value="1"/>
</dbReference>
<dbReference type="Pfam" id="PF13855">
    <property type="entry name" value="LRR_8"/>
    <property type="match status" value="3"/>
</dbReference>
<dbReference type="Pfam" id="PF00595">
    <property type="entry name" value="PDZ"/>
    <property type="match status" value="1"/>
</dbReference>
<dbReference type="SMART" id="SM00364">
    <property type="entry name" value="LRR_BAC"/>
    <property type="match status" value="10"/>
</dbReference>
<dbReference type="SMART" id="SM00365">
    <property type="entry name" value="LRR_SD22"/>
    <property type="match status" value="5"/>
</dbReference>
<dbReference type="SMART" id="SM00369">
    <property type="entry name" value="LRR_TYP"/>
    <property type="match status" value="11"/>
</dbReference>
<dbReference type="SMART" id="SM00228">
    <property type="entry name" value="PDZ"/>
    <property type="match status" value="1"/>
</dbReference>
<dbReference type="SUPFAM" id="SSF52058">
    <property type="entry name" value="L domain-like"/>
    <property type="match status" value="1"/>
</dbReference>
<dbReference type="SUPFAM" id="SSF50156">
    <property type="entry name" value="PDZ domain-like"/>
    <property type="match status" value="1"/>
</dbReference>
<dbReference type="SUPFAM" id="SSF52047">
    <property type="entry name" value="RNI-like"/>
    <property type="match status" value="1"/>
</dbReference>
<dbReference type="PROSITE" id="PS51450">
    <property type="entry name" value="LRR"/>
    <property type="match status" value="15"/>
</dbReference>
<dbReference type="PROSITE" id="PS50106">
    <property type="entry name" value="PDZ"/>
    <property type="match status" value="1"/>
</dbReference>
<keyword id="KW-0025">Alternative splicing</keyword>
<keyword id="KW-0963">Cytoplasm</keyword>
<keyword id="KW-0903">Direct protein sequencing</keyword>
<keyword id="KW-0325">Glycoprotein</keyword>
<keyword id="KW-0433">Leucine-rich repeat</keyword>
<keyword id="KW-0488">Methylation</keyword>
<keyword id="KW-0597">Phosphoprotein</keyword>
<keyword id="KW-1185">Reference proteome</keyword>
<keyword id="KW-0677">Repeat</keyword>
<keyword id="KW-0770">Synapse</keyword>
<organism>
    <name type="scientific">Rattus norvegicus</name>
    <name type="common">Rat</name>
    <dbReference type="NCBI Taxonomy" id="10116"/>
    <lineage>
        <taxon>Eukaryota</taxon>
        <taxon>Metazoa</taxon>
        <taxon>Chordata</taxon>
        <taxon>Craniata</taxon>
        <taxon>Vertebrata</taxon>
        <taxon>Euteleostomi</taxon>
        <taxon>Mammalia</taxon>
        <taxon>Eutheria</taxon>
        <taxon>Euarchontoglires</taxon>
        <taxon>Glires</taxon>
        <taxon>Rodentia</taxon>
        <taxon>Myomorpha</taxon>
        <taxon>Muroidea</taxon>
        <taxon>Muridae</taxon>
        <taxon>Murinae</taxon>
        <taxon>Rattus</taxon>
    </lineage>
</organism>
<comment type="function">
    <text evidence="1">Required for normal synaptic spine architecture and function. Necessary for DISC1 and GRM5 localization to postsynaptic density complexes and for both N-methyl D-aspartate receptor-dependent and metabotropic glutamate receptor-dependent long term depression (By similarity).</text>
</comment>
<comment type="subunit">
    <text evidence="3 6 7">Interacts with CNKSR2 and DLG4 (PubMed:12390249). Interacts with CTNND2/Catenin delta-2. Forms a complex with N-cadherin through CTNND2 (By similarity). Interacts with CAMK2A (PubMed:10827168).</text>
</comment>
<comment type="interaction">
    <interactant intactId="EBI-7798464">
        <id>P70587</id>
    </interactant>
    <interactant intactId="EBI-2640645">
        <id>P11275</id>
        <label>Camk2a</label>
    </interactant>
    <organismsDiffer>false</organismsDiffer>
    <experiments>2</experiments>
</comment>
<comment type="interaction">
    <interactant intactId="EBI-7798464">
        <id>P70587</id>
    </interactant>
    <interactant intactId="EBI-8548356">
        <id>Q9Z1T4</id>
        <label>Cnksr2</label>
    </interactant>
    <organismsDiffer>false</organismsDiffer>
    <experiments>3</experiments>
</comment>
<comment type="interaction">
    <interactant intactId="EBI-7798464">
        <id>P70587</id>
    </interactant>
    <interactant intactId="EBI-375655">
        <id>P31016</id>
        <label>Dlg4</label>
    </interactant>
    <organismsDiffer>false</organismsDiffer>
    <experiments>5</experiments>
</comment>
<comment type="interaction">
    <interactant intactId="EBI-7798464">
        <id>P70587</id>
    </interactant>
    <interactant intactId="EBI-400384">
        <id>P11798</id>
        <label>Camk2a</label>
    </interactant>
    <organismsDiffer>true</organismsDiffer>
    <experiments>2</experiments>
</comment>
<comment type="subcellular location">
    <subcellularLocation>
        <location evidence="1">Cytoplasm</location>
    </subcellularLocation>
    <subcellularLocation>
        <location evidence="1">Postsynaptic density</location>
    </subcellularLocation>
</comment>
<comment type="alternative products">
    <event type="alternative splicing"/>
    <isoform>
        <id>P70587-1</id>
        <name>1</name>
        <name>Variant A</name>
        <sequence type="displayed"/>
    </isoform>
    <isoform>
        <id>P70587-2</id>
        <name>2</name>
        <name>Variant D</name>
        <sequence type="described" ref="VSP_010799"/>
    </isoform>
    <isoform>
        <id>P70587-3</id>
        <name>3</name>
        <sequence type="described" ref="VSP_010798"/>
    </isoform>
    <isoform>
        <id>P70587-4</id>
        <name>4</name>
        <name>Variant B</name>
        <sequence type="described" ref="VSP_010800"/>
    </isoform>
    <isoform>
        <id>P70587-5</id>
        <name>5</name>
        <name>Variant C</name>
        <sequence type="described" ref="VSP_010801"/>
    </isoform>
</comment>
<comment type="tissue specificity">
    <text evidence="8">Brain-specific. Highly concentrated at synapses.</text>
</comment>
<comment type="developmental stage">
    <text evidence="6">Expression of isoform 2 is predominant at 18 dpc, but decreased during postnatal development paralleling increased expression of isoform 4 and isoform 5.</text>
</comment>
<comment type="PTM">
    <text evidence="8">O-glycosylated and phosphorylated.</text>
</comment>
<comment type="miscellaneous">
    <molecule>Isoform 2</molecule>
    <text evidence="11">This is the only isoform to have a potential transmembrane domain.</text>
</comment>
<comment type="similarity">
    <text evidence="11">Belongs to the LAP (LRR and PDZ) protein family.</text>
</comment>
<reference key="1">
    <citation type="journal article" date="1996" name="J. Neurosci.">
        <title>Characterization of densin-180, a new brain-specific synaptic protein of the O-sialoglycoprotein family.</title>
        <authorList>
            <person name="Apperson M.L."/>
            <person name="Moon I.S."/>
            <person name="Kennedy M.B."/>
        </authorList>
    </citation>
    <scope>NUCLEOTIDE SEQUENCE [MRNA] (ISOFORMS 1 AND 3)</scope>
    <scope>PROTEIN SEQUENCE OF 582-595; 715-725 AND 947-959</scope>
    <scope>GLYCOSYLATION</scope>
    <scope>PHOSPHORYLATION</scope>
    <scope>TISSUE SPECIFICITY</scope>
    <source>
        <strain>Sprague-Dawley</strain>
        <tissue>Brain</tissue>
    </source>
</reference>
<reference key="2">
    <citation type="journal article" date="2000" name="J. Biol. Chem.">
        <title>Association of calcium/calmodulin-dependent kinase II with developmentally regulated splice variants of the postsynaptic density protein densin-180.</title>
        <authorList>
            <person name="Strack S."/>
            <person name="Robison A.J."/>
            <person name="Bass M.A."/>
            <person name="Colbran R.J."/>
        </authorList>
    </citation>
    <scope>NUCLEOTIDE SEQUENCE [MRNA] OF 898-1490 (ISOFORMS 1; 2; 4 AND 5)</scope>
    <scope>DEVELOPMENTAL STAGE</scope>
    <scope>MUTAGENESIS OF SER-1288 AND SER-1392</scope>
    <scope>INTERACTION WITH CAMKII</scope>
    <scope>PHOSPHORYLATION AT SER-1288 AND SER-1392</scope>
    <scope>PHOSPHORYLATION AT 1288 (ISOFORM 2)</scope>
    <source>
        <strain>Sprague-Dawley</strain>
    </source>
</reference>
<reference key="3">
    <citation type="journal article" date="2002" name="Genes Cells">
        <title>Densin-180, a synaptic protein, links to PSD-95 through its direct interaction with MAGUIN-1.</title>
        <authorList>
            <person name="Ohtakara K."/>
            <person name="Nishizawa M."/>
            <person name="Izawa I."/>
            <person name="Hata Y."/>
            <person name="Matsushima S."/>
            <person name="Taki W."/>
            <person name="Inada H."/>
            <person name="Takai Y."/>
            <person name="Inagaki M."/>
        </authorList>
    </citation>
    <scope>INTERACTION WITH CNKSR2 AND DLG4</scope>
</reference>
<reference key="4">
    <citation type="journal article" date="2012" name="Nat. Commun.">
        <title>Quantitative maps of protein phosphorylation sites across 14 different rat organs and tissues.</title>
        <authorList>
            <person name="Lundby A."/>
            <person name="Secher A."/>
            <person name="Lage K."/>
            <person name="Nordsborg N.B."/>
            <person name="Dmytriyev A."/>
            <person name="Lundby C."/>
            <person name="Olsen J.V."/>
        </authorList>
    </citation>
    <scope>PHOSPHORYLATION [LARGE SCALE ANALYSIS] AT SER-439; SER-441; SER-443; SER-850; THR-865; SER-947; SER-949 AND SER-1392</scope>
    <scope>IDENTIFICATION BY MASS SPECTROMETRY [LARGE SCALE ANALYSIS]</scope>
</reference>
<proteinExistence type="evidence at protein level"/>
<sequence>MTTKRKLIGRLVPCRCFRGEEEIISVLDYSHCSLQQVPKEVFNFERTLEELYLDANQIEELPKQLFNCQALRKLSIPDNDLSSLPTSIASLVNLKELDISKNGVQEFPENIKCCKCLTIIEASVNPISKLPDGFTQLLNLTQLYLNDAFLEFLPANFGRLVKLRILELRENHLKTLPKSMHKLAQLERLDLGNNEFSELPEVLDQIQNLRELWMDNNALQVLPGSIGKLKMLVYLDMSKNRIETVDMDISGCEALEDLLLSSNMLQQLPDSIGLLKKLTTLKVDDNQLTMLPNTIGNLSLLEEFDCSCNELESLPPTIGYLHSLRTLAVDENFLPELPREIGSCKNVTVMSLRSNKLEFLPEEIGQMQRLRVLNLSDNRLKNLPFSFTKLKELAALWLSDNQSKALIPLQTEAHPETKQRVLTNYMFPQQPRGDEDFQSDSDSFNPTLWEEQRQQRMTVAFEFEDKKEDDESAGKVKALSCQAPWDRGQRGITLQPARLSGDCCTPWARCDQQIQDMPVPQSDPQLAWGCISGLQQERSMCAPLPVAAQSTTLPSLSGRQVEINLKRYPTPYPEDLKNMVKSVQNLVGKPSHGVRVENANPTANTEQTVKEKFEHKWPVAPKEITVEDSFVHPANEMRIGELHPSLAETPLYPPKLVLLGKDKKESTDESEVDKTHCLNNSVSSGTYSDYSPSQASSASSNTRVKVGSLQPTTKDAVHNSLWGNRIAPPFPQPLDAKPLLTQREAVPPGNLPQRPDRLPMSDAFPDNWTDGSHYDNTGFVSEEATGENANNNPLLSSKARSVPAHGRRPLIRQERIVGVPLELEQSTHRHTPETEVPPSNPWQNWTRTPSPFEDRTAFPSKLETTPTTSPLPERKDHMKEPTETPGPFSPGVPWEYHDPTPNRSLGNVFSQIHCRPDSSKGVIAISKSTERLSPLMKDIKSNKFKKSQSIDEIDVGTYKVYNIPLENYASGSDHLGSHERPDKFLGPEHGMSSMSRSQSVPMLDDEMLMYGSSKGPPQQKASMTKKVYQFDQSFNPQGAVEVKAEKRIPPPFAHNSEYVQQPGKNIAKDLVSPRAYRGYPPMEQMFSFSQPSVNEDAMVNAQFASQGPRAGFLRRADSLASSTEMAMFRRVSEPHELPPGDRYGRAAYRGGLEGQSSVSMTDPQFLKRNGRYEDEHPSYQEVKAQAGSFPAKNLTQRRPLSARSYSTESYGASQTRPVSARPTMAALLEKIPSDYNLGNYGDKTSDNSDIKTRPTPVKGEESCGKMPADWRQQLLRHIEARRLDRTPSQQSNILDNGQEDVSPSGQWNPYPLGRRDVPPDTITKKAGSHIQTLMGSQSLQHRSREQQPYEGNINKVTIQQFQSPLPIQIPSSQATRGPQPGRCLIQTKGQRSMDGYPEQFCVRIEKNPGLGFSISGGISGQGNPFKPSDKGIFVTRVQPDGPASNLLQPGDKILQANGHSFVHMEHEKAVLLLKSFQNTVDLVIQRELTV</sequence>